<sequence length="399" mass="44741">MAELLRSLQDSQLVARFQRRCGLFPAPDEGPRENGADPTERAARVPGVEHLPAANGKGGEAPANGLRRAAAPEAYVQKYVVKNYFYYYLFQFSAALGQEVFYITFLPFTHWNIDPYLSRRLIIIWVLVMYIGQVAKDVLKWPRPSSPPVVKLEKRLIAEYGMPSTHAMAATAIAFTLLISTMDRYQYPFVLGLVMAVVFSTLVCLSRLYTGMHTVLDVLGGVLITALLIVLTYPAWTFIDCLDSASPLFPVCVIVVPFFLCYNYPVSDYYSPTRADTTTILAAGAGVTIGFWINHFFQLVSKPAESLPVIQNIPPLTTYMLVLGLTKFAVGIVLILLVRQLVQNLSLQVLYSWFKVVTRNKEARRRLEIEVPYKFVTYTSVGICATTFVPMLHRFLGLP</sequence>
<reference key="1">
    <citation type="journal article" date="2003" name="J. Biol. Chem.">
        <title>Identification and characterization of a novel human sphingosine-1-phosphate phosphohydrolase, hSPP2.</title>
        <authorList>
            <person name="Ogawa C."/>
            <person name="Kihara A."/>
            <person name="Gokoh M."/>
            <person name="Igarashi Y."/>
        </authorList>
    </citation>
    <scope>NUCLEOTIDE SEQUENCE [MRNA] (ISOFORM 1)</scope>
    <scope>FUNCTION</scope>
    <scope>TISSUE SPECIFICITY</scope>
    <scope>SUBCELLULAR LOCATION</scope>
    <scope>CATALYTIC ACTIVITY</scope>
</reference>
<reference key="2">
    <citation type="journal article" date="2004" name="Nat. Genet.">
        <title>Complete sequencing and characterization of 21,243 full-length human cDNAs.</title>
        <authorList>
            <person name="Ota T."/>
            <person name="Suzuki Y."/>
            <person name="Nishikawa T."/>
            <person name="Otsuki T."/>
            <person name="Sugiyama T."/>
            <person name="Irie R."/>
            <person name="Wakamatsu A."/>
            <person name="Hayashi K."/>
            <person name="Sato H."/>
            <person name="Nagai K."/>
            <person name="Kimura K."/>
            <person name="Makita H."/>
            <person name="Sekine M."/>
            <person name="Obayashi M."/>
            <person name="Nishi T."/>
            <person name="Shibahara T."/>
            <person name="Tanaka T."/>
            <person name="Ishii S."/>
            <person name="Yamamoto J."/>
            <person name="Saito K."/>
            <person name="Kawai Y."/>
            <person name="Isono Y."/>
            <person name="Nakamura Y."/>
            <person name="Nagahari K."/>
            <person name="Murakami K."/>
            <person name="Yasuda T."/>
            <person name="Iwayanagi T."/>
            <person name="Wagatsuma M."/>
            <person name="Shiratori A."/>
            <person name="Sudo H."/>
            <person name="Hosoiri T."/>
            <person name="Kaku Y."/>
            <person name="Kodaira H."/>
            <person name="Kondo H."/>
            <person name="Sugawara M."/>
            <person name="Takahashi M."/>
            <person name="Kanda K."/>
            <person name="Yokoi T."/>
            <person name="Furuya T."/>
            <person name="Kikkawa E."/>
            <person name="Omura Y."/>
            <person name="Abe K."/>
            <person name="Kamihara K."/>
            <person name="Katsuta N."/>
            <person name="Sato K."/>
            <person name="Tanikawa M."/>
            <person name="Yamazaki M."/>
            <person name="Ninomiya K."/>
            <person name="Ishibashi T."/>
            <person name="Yamashita H."/>
            <person name="Murakawa K."/>
            <person name="Fujimori K."/>
            <person name="Tanai H."/>
            <person name="Kimata M."/>
            <person name="Watanabe M."/>
            <person name="Hiraoka S."/>
            <person name="Chiba Y."/>
            <person name="Ishida S."/>
            <person name="Ono Y."/>
            <person name="Takiguchi S."/>
            <person name="Watanabe S."/>
            <person name="Yosida M."/>
            <person name="Hotuta T."/>
            <person name="Kusano J."/>
            <person name="Kanehori K."/>
            <person name="Takahashi-Fujii A."/>
            <person name="Hara H."/>
            <person name="Tanase T.-O."/>
            <person name="Nomura Y."/>
            <person name="Togiya S."/>
            <person name="Komai F."/>
            <person name="Hara R."/>
            <person name="Takeuchi K."/>
            <person name="Arita M."/>
            <person name="Imose N."/>
            <person name="Musashino K."/>
            <person name="Yuuki H."/>
            <person name="Oshima A."/>
            <person name="Sasaki N."/>
            <person name="Aotsuka S."/>
            <person name="Yoshikawa Y."/>
            <person name="Matsunawa H."/>
            <person name="Ichihara T."/>
            <person name="Shiohata N."/>
            <person name="Sano S."/>
            <person name="Moriya S."/>
            <person name="Momiyama H."/>
            <person name="Satoh N."/>
            <person name="Takami S."/>
            <person name="Terashima Y."/>
            <person name="Suzuki O."/>
            <person name="Nakagawa S."/>
            <person name="Senoh A."/>
            <person name="Mizoguchi H."/>
            <person name="Goto Y."/>
            <person name="Shimizu F."/>
            <person name="Wakebe H."/>
            <person name="Hishigaki H."/>
            <person name="Watanabe T."/>
            <person name="Sugiyama A."/>
            <person name="Takemoto M."/>
            <person name="Kawakami B."/>
            <person name="Yamazaki M."/>
            <person name="Watanabe K."/>
            <person name="Kumagai A."/>
            <person name="Itakura S."/>
            <person name="Fukuzumi Y."/>
            <person name="Fujimori Y."/>
            <person name="Komiyama M."/>
            <person name="Tashiro H."/>
            <person name="Tanigami A."/>
            <person name="Fujiwara T."/>
            <person name="Ono T."/>
            <person name="Yamada K."/>
            <person name="Fujii Y."/>
            <person name="Ozaki K."/>
            <person name="Hirao M."/>
            <person name="Ohmori Y."/>
            <person name="Kawabata A."/>
            <person name="Hikiji T."/>
            <person name="Kobatake N."/>
            <person name="Inagaki H."/>
            <person name="Ikema Y."/>
            <person name="Okamoto S."/>
            <person name="Okitani R."/>
            <person name="Kawakami T."/>
            <person name="Noguchi S."/>
            <person name="Itoh T."/>
            <person name="Shigeta K."/>
            <person name="Senba T."/>
            <person name="Matsumura K."/>
            <person name="Nakajima Y."/>
            <person name="Mizuno T."/>
            <person name="Morinaga M."/>
            <person name="Sasaki M."/>
            <person name="Togashi T."/>
            <person name="Oyama M."/>
            <person name="Hata H."/>
            <person name="Watanabe M."/>
            <person name="Komatsu T."/>
            <person name="Mizushima-Sugano J."/>
            <person name="Satoh T."/>
            <person name="Shirai Y."/>
            <person name="Takahashi Y."/>
            <person name="Nakagawa K."/>
            <person name="Okumura K."/>
            <person name="Nagase T."/>
            <person name="Nomura N."/>
            <person name="Kikuchi H."/>
            <person name="Masuho Y."/>
            <person name="Yamashita R."/>
            <person name="Nakai K."/>
            <person name="Yada T."/>
            <person name="Nakamura Y."/>
            <person name="Ohara O."/>
            <person name="Isogai T."/>
            <person name="Sugano S."/>
        </authorList>
    </citation>
    <scope>NUCLEOTIDE SEQUENCE [LARGE SCALE MRNA] (ISOFORMS 1 AND 2)</scope>
    <source>
        <tissue>Thalamus</tissue>
    </source>
</reference>
<reference key="3">
    <citation type="journal article" date="2004" name="Genome Res.">
        <title>The status, quality, and expansion of the NIH full-length cDNA project: the Mammalian Gene Collection (MGC).</title>
        <authorList>
            <consortium name="The MGC Project Team"/>
        </authorList>
    </citation>
    <scope>NUCLEOTIDE SEQUENCE [LARGE SCALE MRNA] (ISOFORM 1)</scope>
</reference>
<reference key="4">
    <citation type="journal article" date="2016" name="J. Biol. Chem.">
        <title>Sphingosine-1-phosphate Phosphatase 2 Regulates Pancreatic Islet beta-Cell Endoplasmic Reticulum Stress and Proliferation.</title>
        <authorList>
            <person name="Taguchi Y."/>
            <person name="Allende M.L."/>
            <person name="Mizukami H."/>
            <person name="Cook E.K."/>
            <person name="Gavrilova O."/>
            <person name="Tuymetova G."/>
            <person name="Clarke B.A."/>
            <person name="Chen W."/>
            <person name="Olivera A."/>
            <person name="Proia R.L."/>
        </authorList>
    </citation>
    <scope>CATALYTIC ACTIVITY</scope>
</reference>
<reference key="5">
    <citation type="journal article" date="2007" name="Cell. Signal.">
        <title>Sphingosine 1-phosphate phosphatase 2 is induced during inflammatory responses.</title>
        <authorList>
            <person name="Mechtcheriakova D."/>
            <person name="Wlachos A."/>
            <person name="Sobanov J."/>
            <person name="Kopp T."/>
            <person name="Reuschel R."/>
            <person name="Bornancin F."/>
            <person name="Cai R."/>
            <person name="Zemann B."/>
            <person name="Urtz N."/>
            <person name="Stingl G."/>
            <person name="Zlabinger G."/>
            <person name="Woisetschlager M."/>
            <person name="Baumruker T."/>
            <person name="Billich A."/>
        </authorList>
    </citation>
    <scope>FUNCTION</scope>
    <scope>INDUCTION</scope>
</reference>
<reference key="6">
    <citation type="journal article" date="2020" name="FASEB J.">
        <title>Biosynthesis of the anti-lipid-microdomain sphingoid base 4,14-sphingadiene by the ceramide desaturase FADS3.</title>
        <authorList>
            <person name="Jojima K."/>
            <person name="Edagawa M."/>
            <person name="Sawai M."/>
            <person name="Ohno Y."/>
            <person name="Kihara A."/>
        </authorList>
    </citation>
    <scope>FUNCTION</scope>
    <scope>CATALYTIC ACTIVITY</scope>
</reference>
<comment type="function">
    <text evidence="2 3 5 6 8">Has specific phosphohydrolase activity towards sphingoid base 1-phosphates. Has high phosphohydrolase activity against dihydrosphingosine-1-phosphate and sphingosine-1-phosphate (S1P) in vitro (PubMed:12411432). Sphingosine-1-phosphate phosphatase activity is needed for efficient recycling of sphingosine into the sphingolipid synthesis pathway (By similarity). May play a role in attenuating intracellular sphingosine 1-phosphate (S1P) signaling. May play a role in pro-inflammatory signaling (PubMed:17113265). Plays a role in the regulation of pancreatic islet beta-cell endoplasmic reticulum stress and proliferation (By similarity).</text>
</comment>
<comment type="catalytic activity">
    <reaction evidence="5">
        <text>sphinganine 1-phosphate + H2O = sphinganine + phosphate</text>
        <dbReference type="Rhea" id="RHEA:27514"/>
        <dbReference type="ChEBI" id="CHEBI:15377"/>
        <dbReference type="ChEBI" id="CHEBI:43474"/>
        <dbReference type="ChEBI" id="CHEBI:57817"/>
        <dbReference type="ChEBI" id="CHEBI:57939"/>
    </reaction>
    <physiologicalReaction direction="left-to-right" evidence="5">
        <dbReference type="Rhea" id="RHEA:27515"/>
    </physiologicalReaction>
</comment>
<comment type="catalytic activity">
    <reaction evidence="5 7 8">
        <text>sphing-4-enine 1-phosphate + H2O = sphing-4-enine + phosphate</text>
        <dbReference type="Rhea" id="RHEA:27518"/>
        <dbReference type="ChEBI" id="CHEBI:15377"/>
        <dbReference type="ChEBI" id="CHEBI:43474"/>
        <dbReference type="ChEBI" id="CHEBI:57756"/>
        <dbReference type="ChEBI" id="CHEBI:60119"/>
    </reaction>
    <physiologicalReaction direction="left-to-right" evidence="7">
        <dbReference type="Rhea" id="RHEA:27519"/>
    </physiologicalReaction>
</comment>
<comment type="catalytic activity">
    <reaction evidence="8">
        <text>(4R)-hydroxysphinganine 1-phosphate + H2O = (4R)-hydroxysphinganine + phosphate</text>
        <dbReference type="Rhea" id="RHEA:33067"/>
        <dbReference type="ChEBI" id="CHEBI:15377"/>
        <dbReference type="ChEBI" id="CHEBI:43474"/>
        <dbReference type="ChEBI" id="CHEBI:64124"/>
        <dbReference type="ChEBI" id="CHEBI:64795"/>
    </reaction>
    <physiologicalReaction direction="left-to-right" evidence="11">
        <dbReference type="Rhea" id="RHEA:33068"/>
    </physiologicalReaction>
</comment>
<comment type="subcellular location">
    <subcellularLocation>
        <location evidence="5">Endoplasmic reticulum membrane</location>
        <topology evidence="5">Multi-pass membrane protein</topology>
    </subcellularLocation>
</comment>
<comment type="alternative products">
    <event type="alternative splicing"/>
    <isoform>
        <id>Q8IWX5-1</id>
        <name>1</name>
        <sequence type="displayed"/>
    </isoform>
    <isoform>
        <id>Q8IWX5-2</id>
        <name>2</name>
        <sequence type="described" ref="VSP_039385"/>
    </isoform>
</comment>
<comment type="tissue specificity">
    <text evidence="5">Expressed strongly in kidney and heart, followed by brain, colon, small intestine and lung. Not detected in skeletal muscle, thymus, spleen, liver, placenta, and peripheral blood leukocytes.</text>
</comment>
<comment type="induction">
    <text evidence="6">Strongly induced by TNF, also induced by bacterial lipopolycaccharides (LPS) in neutrophils, endothelial cells, and other cell types. Not induced by growth-related factors.</text>
</comment>
<comment type="similarity">
    <text evidence="10">Belongs to the type 2 lipid phosphate phosphatase family.</text>
</comment>
<accession>Q8IWX5</accession>
<accession>A3KPB4</accession>
<accession>Q8N8Q6</accession>
<name>SGPP2_HUMAN</name>
<dbReference type="EC" id="3.1.3.-" evidence="5 7"/>
<dbReference type="EMBL" id="AF542512">
    <property type="protein sequence ID" value="AAN28731.1"/>
    <property type="molecule type" value="mRNA"/>
</dbReference>
<dbReference type="EMBL" id="AK096323">
    <property type="protein sequence ID" value="BAC04762.1"/>
    <property type="molecule type" value="mRNA"/>
</dbReference>
<dbReference type="EMBL" id="AK314322">
    <property type="protein sequence ID" value="BAG36970.1"/>
    <property type="molecule type" value="mRNA"/>
</dbReference>
<dbReference type="EMBL" id="BC134342">
    <property type="protein sequence ID" value="AAI34343.1"/>
    <property type="molecule type" value="mRNA"/>
</dbReference>
<dbReference type="CCDS" id="CCDS2453.1">
    <molecule id="Q8IWX5-1"/>
</dbReference>
<dbReference type="RefSeq" id="NP_001307762.1">
    <molecule id="Q8IWX5-2"/>
    <property type="nucleotide sequence ID" value="NM_001320833.2"/>
</dbReference>
<dbReference type="RefSeq" id="NP_001307763.1">
    <molecule id="Q8IWX5-2"/>
    <property type="nucleotide sequence ID" value="NM_001320834.2"/>
</dbReference>
<dbReference type="RefSeq" id="NP_689599.2">
    <molecule id="Q8IWX5-1"/>
    <property type="nucleotide sequence ID" value="NM_152386.3"/>
</dbReference>
<dbReference type="RefSeq" id="XP_016858844.1">
    <property type="nucleotide sequence ID" value="XM_017003355.1"/>
</dbReference>
<dbReference type="SMR" id="Q8IWX5"/>
<dbReference type="BioGRID" id="126231">
    <property type="interactions" value="4"/>
</dbReference>
<dbReference type="FunCoup" id="Q8IWX5">
    <property type="interactions" value="660"/>
</dbReference>
<dbReference type="IntAct" id="Q8IWX5">
    <property type="interactions" value="2"/>
</dbReference>
<dbReference type="STRING" id="9606.ENSP00000315137"/>
<dbReference type="SwissLipids" id="SLP:000000159"/>
<dbReference type="PhosphoSitePlus" id="Q8IWX5"/>
<dbReference type="BioMuta" id="SGPP2"/>
<dbReference type="DMDM" id="41700844"/>
<dbReference type="jPOST" id="Q8IWX5"/>
<dbReference type="MassIVE" id="Q8IWX5"/>
<dbReference type="PaxDb" id="9606-ENSP00000315137"/>
<dbReference type="PeptideAtlas" id="Q8IWX5"/>
<dbReference type="ProteomicsDB" id="70920">
    <molecule id="Q8IWX5-1"/>
</dbReference>
<dbReference type="Antibodypedia" id="34359">
    <property type="antibodies" value="82 antibodies from 18 providers"/>
</dbReference>
<dbReference type="DNASU" id="130367"/>
<dbReference type="Ensembl" id="ENST00000321276.8">
    <molecule id="Q8IWX5-1"/>
    <property type="protein sequence ID" value="ENSP00000315137.7"/>
    <property type="gene ID" value="ENSG00000163082.10"/>
</dbReference>
<dbReference type="GeneID" id="130367"/>
<dbReference type="KEGG" id="hsa:130367"/>
<dbReference type="MANE-Select" id="ENST00000321276.8">
    <property type="protein sequence ID" value="ENSP00000315137.7"/>
    <property type="RefSeq nucleotide sequence ID" value="NM_152386.4"/>
    <property type="RefSeq protein sequence ID" value="NP_689599.2"/>
</dbReference>
<dbReference type="UCSC" id="uc010zlo.3">
    <molecule id="Q8IWX5-1"/>
    <property type="organism name" value="human"/>
</dbReference>
<dbReference type="AGR" id="HGNC:19953"/>
<dbReference type="CTD" id="130367"/>
<dbReference type="DisGeNET" id="130367"/>
<dbReference type="GeneCards" id="SGPP2"/>
<dbReference type="HGNC" id="HGNC:19953">
    <property type="gene designation" value="SGPP2"/>
</dbReference>
<dbReference type="HPA" id="ENSG00000163082">
    <property type="expression patterns" value="Low tissue specificity"/>
</dbReference>
<dbReference type="MIM" id="612827">
    <property type="type" value="gene"/>
</dbReference>
<dbReference type="neXtProt" id="NX_Q8IWX5"/>
<dbReference type="OpenTargets" id="ENSG00000163082"/>
<dbReference type="PharmGKB" id="PA134956234"/>
<dbReference type="VEuPathDB" id="HostDB:ENSG00000163082"/>
<dbReference type="eggNOG" id="KOG2822">
    <property type="taxonomic scope" value="Eukaryota"/>
</dbReference>
<dbReference type="GeneTree" id="ENSGT00940000159500"/>
<dbReference type="HOGENOM" id="CLU_043042_1_0_1"/>
<dbReference type="InParanoid" id="Q8IWX5"/>
<dbReference type="OMA" id="KFMVGIV"/>
<dbReference type="OrthoDB" id="301434at2759"/>
<dbReference type="PAN-GO" id="Q8IWX5">
    <property type="GO annotations" value="4 GO annotations based on evolutionary models"/>
</dbReference>
<dbReference type="PhylomeDB" id="Q8IWX5"/>
<dbReference type="TreeFam" id="TF323419"/>
<dbReference type="PathwayCommons" id="Q8IWX5"/>
<dbReference type="Reactome" id="R-HSA-9845614">
    <property type="pathway name" value="Sphingolipid catabolism"/>
</dbReference>
<dbReference type="BioGRID-ORCS" id="130367">
    <property type="hits" value="11 hits in 1154 CRISPR screens"/>
</dbReference>
<dbReference type="ChiTaRS" id="SGPP2">
    <property type="organism name" value="human"/>
</dbReference>
<dbReference type="GenomeRNAi" id="130367"/>
<dbReference type="Pharos" id="Q8IWX5">
    <property type="development level" value="Tbio"/>
</dbReference>
<dbReference type="PRO" id="PR:Q8IWX5"/>
<dbReference type="Proteomes" id="UP000005640">
    <property type="component" value="Chromosome 2"/>
</dbReference>
<dbReference type="RNAct" id="Q8IWX5">
    <property type="molecule type" value="protein"/>
</dbReference>
<dbReference type="Bgee" id="ENSG00000163082">
    <property type="expression patterns" value="Expressed in ileal mucosa and 166 other cell types or tissues"/>
</dbReference>
<dbReference type="GO" id="GO:0005783">
    <property type="term" value="C:endoplasmic reticulum"/>
    <property type="evidence" value="ECO:0000314"/>
    <property type="project" value="UniProtKB"/>
</dbReference>
<dbReference type="GO" id="GO:0005789">
    <property type="term" value="C:endoplasmic reticulum membrane"/>
    <property type="evidence" value="ECO:0000318"/>
    <property type="project" value="GO_Central"/>
</dbReference>
<dbReference type="GO" id="GO:0070780">
    <property type="term" value="F:dihydrosphingosine-1-phosphate phosphatase activity"/>
    <property type="evidence" value="ECO:0007669"/>
    <property type="project" value="RHEA"/>
</dbReference>
<dbReference type="GO" id="GO:0042392">
    <property type="term" value="F:sphingosine-1-phosphate phosphatase activity"/>
    <property type="evidence" value="ECO:0000314"/>
    <property type="project" value="UniProtKB"/>
</dbReference>
<dbReference type="GO" id="GO:0046839">
    <property type="term" value="P:phospholipid dephosphorylation"/>
    <property type="evidence" value="ECO:0000318"/>
    <property type="project" value="GO_Central"/>
</dbReference>
<dbReference type="GO" id="GO:0061469">
    <property type="term" value="P:regulation of type B pancreatic cell proliferation"/>
    <property type="evidence" value="ECO:0000250"/>
    <property type="project" value="UniProtKB"/>
</dbReference>
<dbReference type="GO" id="GO:0030149">
    <property type="term" value="P:sphingolipid catabolic process"/>
    <property type="evidence" value="ECO:0000304"/>
    <property type="project" value="Reactome"/>
</dbReference>
<dbReference type="GO" id="GO:0006670">
    <property type="term" value="P:sphingosine metabolic process"/>
    <property type="evidence" value="ECO:0000314"/>
    <property type="project" value="UniProtKB"/>
</dbReference>
<dbReference type="CDD" id="cd03388">
    <property type="entry name" value="PAP2_SPPase1"/>
    <property type="match status" value="1"/>
</dbReference>
<dbReference type="FunFam" id="1.20.144.10:FF:000011">
    <property type="entry name" value="sphingosine-1-phosphate phosphatase 1"/>
    <property type="match status" value="1"/>
</dbReference>
<dbReference type="Gene3D" id="1.20.144.10">
    <property type="entry name" value="Phosphatidic acid phosphatase type 2/haloperoxidase"/>
    <property type="match status" value="1"/>
</dbReference>
<dbReference type="InterPro" id="IPR036938">
    <property type="entry name" value="P_Acid_Pase_2/haloperoxi_sf"/>
</dbReference>
<dbReference type="InterPro" id="IPR000326">
    <property type="entry name" value="P_Acid_Pase_2/haloperoxidase"/>
</dbReference>
<dbReference type="PANTHER" id="PTHR14969:SF14">
    <property type="entry name" value="SPHINGOSINE-1-PHOSPHATE PHOSPHATASE 2"/>
    <property type="match status" value="1"/>
</dbReference>
<dbReference type="PANTHER" id="PTHR14969">
    <property type="entry name" value="SPHINGOSINE-1-PHOSPHATE PHOSPHOHYDROLASE"/>
    <property type="match status" value="1"/>
</dbReference>
<dbReference type="Pfam" id="PF01569">
    <property type="entry name" value="PAP2"/>
    <property type="match status" value="1"/>
</dbReference>
<dbReference type="SMART" id="SM00014">
    <property type="entry name" value="acidPPc"/>
    <property type="match status" value="1"/>
</dbReference>
<dbReference type="SUPFAM" id="SSF48317">
    <property type="entry name" value="Acid phosphatase/Vanadium-dependent haloperoxidase"/>
    <property type="match status" value="1"/>
</dbReference>
<proteinExistence type="evidence at protein level"/>
<organism>
    <name type="scientific">Homo sapiens</name>
    <name type="common">Human</name>
    <dbReference type="NCBI Taxonomy" id="9606"/>
    <lineage>
        <taxon>Eukaryota</taxon>
        <taxon>Metazoa</taxon>
        <taxon>Chordata</taxon>
        <taxon>Craniata</taxon>
        <taxon>Vertebrata</taxon>
        <taxon>Euteleostomi</taxon>
        <taxon>Mammalia</taxon>
        <taxon>Eutheria</taxon>
        <taxon>Euarchontoglires</taxon>
        <taxon>Primates</taxon>
        <taxon>Haplorrhini</taxon>
        <taxon>Catarrhini</taxon>
        <taxon>Hominidae</taxon>
        <taxon>Homo</taxon>
    </lineage>
</organism>
<gene>
    <name evidence="12" type="primary">SGPP2</name>
</gene>
<feature type="chain" id="PRO_0000114480" description="Sphingosine-1-phosphate phosphatase 2">
    <location>
        <begin position="1"/>
        <end position="399"/>
    </location>
</feature>
<feature type="transmembrane region" description="Helical" evidence="4">
    <location>
        <begin position="88"/>
        <end position="108"/>
    </location>
</feature>
<feature type="transmembrane region" description="Helical" evidence="4">
    <location>
        <begin position="121"/>
        <end position="141"/>
    </location>
</feature>
<feature type="transmembrane region" description="Helical" evidence="4">
    <location>
        <begin position="160"/>
        <end position="180"/>
    </location>
</feature>
<feature type="transmembrane region" description="Helical" evidence="4">
    <location>
        <begin position="185"/>
        <end position="205"/>
    </location>
</feature>
<feature type="transmembrane region" description="Helical" evidence="4">
    <location>
        <begin position="219"/>
        <end position="239"/>
    </location>
</feature>
<feature type="transmembrane region" description="Helical" evidence="4">
    <location>
        <begin position="247"/>
        <end position="267"/>
    </location>
</feature>
<feature type="transmembrane region" description="Helical" evidence="4">
    <location>
        <begin position="280"/>
        <end position="300"/>
    </location>
</feature>
<feature type="transmembrane region" description="Helical" evidence="4">
    <location>
        <begin position="318"/>
        <end position="338"/>
    </location>
</feature>
<feature type="transmembrane region" description="Helical" evidence="4">
    <location>
        <begin position="371"/>
        <end position="391"/>
    </location>
</feature>
<feature type="region of interest" description="Phosphatase sequence motif I" evidence="10">
    <location>
        <begin position="136"/>
        <end position="144"/>
    </location>
</feature>
<feature type="region of interest" description="Phosphatase sequence motif II" evidence="10">
    <location>
        <begin position="163"/>
        <end position="166"/>
    </location>
</feature>
<feature type="region of interest" description="Phosphatase sequence motif III" evidence="10">
    <location>
        <begin position="206"/>
        <end position="217"/>
    </location>
</feature>
<feature type="active site" description="Proton donor" evidence="1">
    <location>
        <position position="166"/>
    </location>
</feature>
<feature type="active site" description="Nucleophile" evidence="1">
    <location>
        <position position="213"/>
    </location>
</feature>
<feature type="site" description="Stabilizes the active site histidine for nucleophilic attack" evidence="1">
    <location>
        <position position="217"/>
    </location>
</feature>
<feature type="splice variant" id="VSP_039385" description="In isoform 2." evidence="9">
    <location>
        <begin position="1"/>
        <end position="128"/>
    </location>
</feature>
<protein>
    <recommendedName>
        <fullName evidence="10">Sphingosine-1-phosphate phosphatase 2</fullName>
        <shortName>SPPase2</shortName>
        <shortName>Spp2</shortName>
        <shortName>hSPP2</shortName>
        <ecNumber evidence="5 7">3.1.3.-</ecNumber>
    </recommendedName>
    <alternativeName>
        <fullName>Sphingosine-1-phosphatase 2</fullName>
    </alternativeName>
</protein>
<keyword id="KW-0025">Alternative splicing</keyword>
<keyword id="KW-0256">Endoplasmic reticulum</keyword>
<keyword id="KW-0378">Hydrolase</keyword>
<keyword id="KW-0443">Lipid metabolism</keyword>
<keyword id="KW-0472">Membrane</keyword>
<keyword id="KW-1267">Proteomics identification</keyword>
<keyword id="KW-1185">Reference proteome</keyword>
<keyword id="KW-0812">Transmembrane</keyword>
<keyword id="KW-1133">Transmembrane helix</keyword>
<evidence type="ECO:0000250" key="1">
    <source>
        <dbReference type="UniProtKB" id="P0A924"/>
    </source>
</evidence>
<evidence type="ECO:0000250" key="2">
    <source>
        <dbReference type="UniProtKB" id="Q810K3"/>
    </source>
</evidence>
<evidence type="ECO:0000250" key="3">
    <source>
        <dbReference type="UniProtKB" id="Q9BX95"/>
    </source>
</evidence>
<evidence type="ECO:0000255" key="4"/>
<evidence type="ECO:0000269" key="5">
    <source>
    </source>
</evidence>
<evidence type="ECO:0000269" key="6">
    <source>
    </source>
</evidence>
<evidence type="ECO:0000269" key="7">
    <source>
    </source>
</evidence>
<evidence type="ECO:0000269" key="8">
    <source>
    </source>
</evidence>
<evidence type="ECO:0000303" key="9">
    <source>
    </source>
</evidence>
<evidence type="ECO:0000305" key="10"/>
<evidence type="ECO:0000305" key="11">
    <source>
    </source>
</evidence>
<evidence type="ECO:0000312" key="12">
    <source>
        <dbReference type="HGNC" id="HGNC:19953"/>
    </source>
</evidence>